<evidence type="ECO:0000255" key="1">
    <source>
        <dbReference type="HAMAP-Rule" id="MF_00096"/>
    </source>
</evidence>
<gene>
    <name evidence="1" type="primary">mutS</name>
    <name type="ordered locus">PMT9312_1737</name>
</gene>
<reference key="1">
    <citation type="journal article" date="2006" name="Science">
        <title>Genomic islands and the ecology and evolution of Prochlorococcus.</title>
        <authorList>
            <person name="Coleman M.L."/>
            <person name="Sullivan M.B."/>
            <person name="Martiny A.C."/>
            <person name="Steglich C."/>
            <person name="Barry K."/>
            <person name="Delong E.F."/>
            <person name="Chisholm S.W."/>
        </authorList>
    </citation>
    <scope>NUCLEOTIDE SEQUENCE [LARGE SCALE GENOMIC DNA]</scope>
    <source>
        <strain>MIT 9312</strain>
    </source>
</reference>
<keyword id="KW-0067">ATP-binding</keyword>
<keyword id="KW-0227">DNA damage</keyword>
<keyword id="KW-0234">DNA repair</keyword>
<keyword id="KW-0238">DNA-binding</keyword>
<keyword id="KW-0547">Nucleotide-binding</keyword>
<comment type="function">
    <text evidence="1">This protein is involved in the repair of mismatches in DNA. It is possible that it carries out the mismatch recognition step. This protein has a weak ATPase activity.</text>
</comment>
<comment type="similarity">
    <text evidence="1">Belongs to the DNA mismatch repair MutS family.</text>
</comment>
<proteinExistence type="inferred from homology"/>
<dbReference type="EMBL" id="CP000111">
    <property type="protein sequence ID" value="ABB50798.1"/>
    <property type="molecule type" value="Genomic_DNA"/>
</dbReference>
<dbReference type="RefSeq" id="WP_011377279.1">
    <property type="nucleotide sequence ID" value="NC_007577.1"/>
</dbReference>
<dbReference type="SMR" id="Q317Z7"/>
<dbReference type="STRING" id="74546.PMT9312_1737"/>
<dbReference type="KEGG" id="pmi:PMT9312_1737"/>
<dbReference type="eggNOG" id="COG0249">
    <property type="taxonomic scope" value="Bacteria"/>
</dbReference>
<dbReference type="HOGENOM" id="CLU_002472_1_3_3"/>
<dbReference type="OrthoDB" id="9802448at2"/>
<dbReference type="Proteomes" id="UP000002715">
    <property type="component" value="Chromosome"/>
</dbReference>
<dbReference type="GO" id="GO:0005829">
    <property type="term" value="C:cytosol"/>
    <property type="evidence" value="ECO:0007669"/>
    <property type="project" value="TreeGrafter"/>
</dbReference>
<dbReference type="GO" id="GO:0005524">
    <property type="term" value="F:ATP binding"/>
    <property type="evidence" value="ECO:0007669"/>
    <property type="project" value="UniProtKB-UniRule"/>
</dbReference>
<dbReference type="GO" id="GO:0140664">
    <property type="term" value="F:ATP-dependent DNA damage sensor activity"/>
    <property type="evidence" value="ECO:0007669"/>
    <property type="project" value="InterPro"/>
</dbReference>
<dbReference type="GO" id="GO:0003684">
    <property type="term" value="F:damaged DNA binding"/>
    <property type="evidence" value="ECO:0007669"/>
    <property type="project" value="UniProtKB-UniRule"/>
</dbReference>
<dbReference type="GO" id="GO:0030983">
    <property type="term" value="F:mismatched DNA binding"/>
    <property type="evidence" value="ECO:0007669"/>
    <property type="project" value="InterPro"/>
</dbReference>
<dbReference type="GO" id="GO:0006298">
    <property type="term" value="P:mismatch repair"/>
    <property type="evidence" value="ECO:0007669"/>
    <property type="project" value="UniProtKB-UniRule"/>
</dbReference>
<dbReference type="CDD" id="cd03284">
    <property type="entry name" value="ABC_MutS1"/>
    <property type="match status" value="1"/>
</dbReference>
<dbReference type="FunFam" id="1.10.1420.10:FF:000001">
    <property type="entry name" value="DNA mismatch repair protein MutS"/>
    <property type="match status" value="1"/>
</dbReference>
<dbReference type="FunFam" id="3.40.50.300:FF:000870">
    <property type="entry name" value="MutS protein homolog 4"/>
    <property type="match status" value="1"/>
</dbReference>
<dbReference type="Gene3D" id="1.10.1420.10">
    <property type="match status" value="2"/>
</dbReference>
<dbReference type="Gene3D" id="3.40.1170.10">
    <property type="entry name" value="DNA repair protein MutS, domain I"/>
    <property type="match status" value="1"/>
</dbReference>
<dbReference type="Gene3D" id="3.30.420.110">
    <property type="entry name" value="MutS, connector domain"/>
    <property type="match status" value="1"/>
</dbReference>
<dbReference type="Gene3D" id="3.40.50.300">
    <property type="entry name" value="P-loop containing nucleotide triphosphate hydrolases"/>
    <property type="match status" value="1"/>
</dbReference>
<dbReference type="HAMAP" id="MF_00096">
    <property type="entry name" value="MutS"/>
    <property type="match status" value="1"/>
</dbReference>
<dbReference type="InterPro" id="IPR005748">
    <property type="entry name" value="DNA_mismatch_repair_MutS"/>
</dbReference>
<dbReference type="InterPro" id="IPR007695">
    <property type="entry name" value="DNA_mismatch_repair_MutS-lik_N"/>
</dbReference>
<dbReference type="InterPro" id="IPR017261">
    <property type="entry name" value="DNA_mismatch_repair_MutS/MSH"/>
</dbReference>
<dbReference type="InterPro" id="IPR000432">
    <property type="entry name" value="DNA_mismatch_repair_MutS_C"/>
</dbReference>
<dbReference type="InterPro" id="IPR007861">
    <property type="entry name" value="DNA_mismatch_repair_MutS_clamp"/>
</dbReference>
<dbReference type="InterPro" id="IPR007696">
    <property type="entry name" value="DNA_mismatch_repair_MutS_core"/>
</dbReference>
<dbReference type="InterPro" id="IPR016151">
    <property type="entry name" value="DNA_mismatch_repair_MutS_N"/>
</dbReference>
<dbReference type="InterPro" id="IPR036187">
    <property type="entry name" value="DNA_mismatch_repair_MutS_sf"/>
</dbReference>
<dbReference type="InterPro" id="IPR007860">
    <property type="entry name" value="DNA_mmatch_repair_MutS_con_dom"/>
</dbReference>
<dbReference type="InterPro" id="IPR045076">
    <property type="entry name" value="MutS"/>
</dbReference>
<dbReference type="InterPro" id="IPR036678">
    <property type="entry name" value="MutS_con_dom_sf"/>
</dbReference>
<dbReference type="InterPro" id="IPR027417">
    <property type="entry name" value="P-loop_NTPase"/>
</dbReference>
<dbReference type="NCBIfam" id="TIGR01070">
    <property type="entry name" value="mutS1"/>
    <property type="match status" value="1"/>
</dbReference>
<dbReference type="NCBIfam" id="NF003810">
    <property type="entry name" value="PRK05399.1"/>
    <property type="match status" value="1"/>
</dbReference>
<dbReference type="PANTHER" id="PTHR11361:SF34">
    <property type="entry name" value="DNA MISMATCH REPAIR PROTEIN MSH1, MITOCHONDRIAL"/>
    <property type="match status" value="1"/>
</dbReference>
<dbReference type="PANTHER" id="PTHR11361">
    <property type="entry name" value="DNA MISMATCH REPAIR PROTEIN MUTS FAMILY MEMBER"/>
    <property type="match status" value="1"/>
</dbReference>
<dbReference type="Pfam" id="PF01624">
    <property type="entry name" value="MutS_I"/>
    <property type="match status" value="1"/>
</dbReference>
<dbReference type="Pfam" id="PF05188">
    <property type="entry name" value="MutS_II"/>
    <property type="match status" value="1"/>
</dbReference>
<dbReference type="Pfam" id="PF05192">
    <property type="entry name" value="MutS_III"/>
    <property type="match status" value="1"/>
</dbReference>
<dbReference type="Pfam" id="PF05190">
    <property type="entry name" value="MutS_IV"/>
    <property type="match status" value="1"/>
</dbReference>
<dbReference type="Pfam" id="PF00488">
    <property type="entry name" value="MutS_V"/>
    <property type="match status" value="1"/>
</dbReference>
<dbReference type="PIRSF" id="PIRSF037677">
    <property type="entry name" value="DNA_mis_repair_Msh6"/>
    <property type="match status" value="1"/>
</dbReference>
<dbReference type="SMART" id="SM00534">
    <property type="entry name" value="MUTSac"/>
    <property type="match status" value="1"/>
</dbReference>
<dbReference type="SMART" id="SM00533">
    <property type="entry name" value="MUTSd"/>
    <property type="match status" value="1"/>
</dbReference>
<dbReference type="SUPFAM" id="SSF55271">
    <property type="entry name" value="DNA repair protein MutS, domain I"/>
    <property type="match status" value="1"/>
</dbReference>
<dbReference type="SUPFAM" id="SSF53150">
    <property type="entry name" value="DNA repair protein MutS, domain II"/>
    <property type="match status" value="1"/>
</dbReference>
<dbReference type="SUPFAM" id="SSF48334">
    <property type="entry name" value="DNA repair protein MutS, domain III"/>
    <property type="match status" value="1"/>
</dbReference>
<dbReference type="SUPFAM" id="SSF52540">
    <property type="entry name" value="P-loop containing nucleoside triphosphate hydrolases"/>
    <property type="match status" value="1"/>
</dbReference>
<dbReference type="PROSITE" id="PS00486">
    <property type="entry name" value="DNA_MISMATCH_REPAIR_2"/>
    <property type="match status" value="1"/>
</dbReference>
<organism>
    <name type="scientific">Prochlorococcus marinus (strain MIT 9312)</name>
    <dbReference type="NCBI Taxonomy" id="74546"/>
    <lineage>
        <taxon>Bacteria</taxon>
        <taxon>Bacillati</taxon>
        <taxon>Cyanobacteriota</taxon>
        <taxon>Cyanophyceae</taxon>
        <taxon>Synechococcales</taxon>
        <taxon>Prochlorococcaceae</taxon>
        <taxon>Prochlorococcus</taxon>
    </lineage>
</organism>
<feature type="chain" id="PRO_0000335200" description="DNA mismatch repair protein MutS">
    <location>
        <begin position="1"/>
        <end position="913"/>
    </location>
</feature>
<feature type="binding site" evidence="1">
    <location>
        <begin position="720"/>
        <end position="727"/>
    </location>
    <ligand>
        <name>ATP</name>
        <dbReference type="ChEBI" id="CHEBI:30616"/>
    </ligand>
</feature>
<protein>
    <recommendedName>
        <fullName evidence="1">DNA mismatch repair protein MutS</fullName>
    </recommendedName>
</protein>
<sequence length="913" mass="103902">MKEDTIIQKNLFAIDNENNEQKEITKIPEDLSWEDLKKESQKRPRQRKNTTNLINKFKTDLISKNKNVCINEESYSYKTVSKLKLTPVMKHYVTLKEENKDRLLLYRLGDFFECFFEDAVLISNLLEITLTSKDAGKEIGKIPMAGVPYHAMERYCADLIKKNYSVVICDQLEKSSGNYGTPIKRGITRIITPGTVIEEGMLIAKKNNWITAIYLSEENSNESYEWGISKADVSTGELITMEGQSLSKLFDEIIKLDSSEIIIGSNEVRNLLMNGNSQISYTVSQETNFGINEANYLIKKYFQIVSLEGIGLKNLNNATRSLGGLLNYLKKINPLNLDKDSSVKISLDFPQIQFCHNKLIIDYQTQKNLEIKNTQRENNYVGSLLWSIDRTYTCMGARCLRRWIDSPLLNVNEIYKRQNIISNFIESKQVRMDTQNLLRAMGDLERLAGRACAGHASPRDLIAIAEGLKKLPRIKSIIELFKYDLPDWTDQLKNIDEELLELADTISFQLIEHPPLNISEGGMIHDGVDNILDGLRNLMDDYSEWLNQEELKERKISKISNLKIQFHKNFGYYISINKSKVNLAPQHWIKRQTLTNEERYITTDIKNKENKIFQIKSRASSREYEIFCELRKMVAEKTKQIRSIAKSIASLDALLGLSITSVENNFIKPALIPINDSQKKNSTKIIAGRNPIVEQLLNDKKFTANDICFDDNQKLIILTGPNASGKSCFIRQIGLIQILAQIGSFIPANKAEIKIADRIFTRIGAVDDQSSGQSTFMVEMSETASILNQATSSSLVLLDEIGRGTSTFDGLSIAWSVSEYLAKKIKCNTIFATHYHELNYLKNSNKNIENFQVLVEQNNDQIIFSHKIKKGGSNKSYGIEAAKLAGVPREVIEKAKLVLNSLEENNKFNKNND</sequence>
<name>MUTS_PROM9</name>
<accession>Q317Z7</accession>